<accession>B8DW52</accession>
<proteinExistence type="inferred from homology"/>
<dbReference type="EC" id="6.1.1.11" evidence="1"/>
<dbReference type="EMBL" id="CP001213">
    <property type="protein sequence ID" value="ACL28703.1"/>
    <property type="molecule type" value="Genomic_DNA"/>
</dbReference>
<dbReference type="RefSeq" id="WP_004268644.1">
    <property type="nucleotide sequence ID" value="NC_011835.1"/>
</dbReference>
<dbReference type="SMR" id="B8DW52"/>
<dbReference type="STRING" id="442563.BLA_0401"/>
<dbReference type="GeneID" id="29695459"/>
<dbReference type="KEGG" id="bla:BLA_0401"/>
<dbReference type="HOGENOM" id="CLU_023797_0_1_11"/>
<dbReference type="UniPathway" id="UPA00906">
    <property type="reaction ID" value="UER00895"/>
</dbReference>
<dbReference type="Proteomes" id="UP000002456">
    <property type="component" value="Chromosome"/>
</dbReference>
<dbReference type="GO" id="GO:0005737">
    <property type="term" value="C:cytoplasm"/>
    <property type="evidence" value="ECO:0007669"/>
    <property type="project" value="UniProtKB-SubCell"/>
</dbReference>
<dbReference type="GO" id="GO:0005524">
    <property type="term" value="F:ATP binding"/>
    <property type="evidence" value="ECO:0007669"/>
    <property type="project" value="UniProtKB-UniRule"/>
</dbReference>
<dbReference type="GO" id="GO:0004828">
    <property type="term" value="F:serine-tRNA ligase activity"/>
    <property type="evidence" value="ECO:0007669"/>
    <property type="project" value="UniProtKB-UniRule"/>
</dbReference>
<dbReference type="GO" id="GO:0016260">
    <property type="term" value="P:selenocysteine biosynthetic process"/>
    <property type="evidence" value="ECO:0007669"/>
    <property type="project" value="UniProtKB-UniRule"/>
</dbReference>
<dbReference type="GO" id="GO:0006434">
    <property type="term" value="P:seryl-tRNA aminoacylation"/>
    <property type="evidence" value="ECO:0007669"/>
    <property type="project" value="UniProtKB-UniRule"/>
</dbReference>
<dbReference type="CDD" id="cd00770">
    <property type="entry name" value="SerRS_core"/>
    <property type="match status" value="1"/>
</dbReference>
<dbReference type="Gene3D" id="3.30.930.10">
    <property type="entry name" value="Bira Bifunctional Protein, Domain 2"/>
    <property type="match status" value="1"/>
</dbReference>
<dbReference type="Gene3D" id="1.10.287.40">
    <property type="entry name" value="Serine-tRNA synthetase, tRNA binding domain"/>
    <property type="match status" value="1"/>
</dbReference>
<dbReference type="HAMAP" id="MF_00176">
    <property type="entry name" value="Ser_tRNA_synth_type1"/>
    <property type="match status" value="1"/>
</dbReference>
<dbReference type="InterPro" id="IPR002314">
    <property type="entry name" value="aa-tRNA-synt_IIb"/>
</dbReference>
<dbReference type="InterPro" id="IPR006195">
    <property type="entry name" value="aa-tRNA-synth_II"/>
</dbReference>
<dbReference type="InterPro" id="IPR045864">
    <property type="entry name" value="aa-tRNA-synth_II/BPL/LPL"/>
</dbReference>
<dbReference type="InterPro" id="IPR002317">
    <property type="entry name" value="Ser-tRNA-ligase_type_1"/>
</dbReference>
<dbReference type="InterPro" id="IPR015866">
    <property type="entry name" value="Ser-tRNA-synth_1_N"/>
</dbReference>
<dbReference type="InterPro" id="IPR042103">
    <property type="entry name" value="SerRS_1_N_sf"/>
</dbReference>
<dbReference type="InterPro" id="IPR033729">
    <property type="entry name" value="SerRS_core"/>
</dbReference>
<dbReference type="InterPro" id="IPR010978">
    <property type="entry name" value="tRNA-bd_arm"/>
</dbReference>
<dbReference type="NCBIfam" id="TIGR00414">
    <property type="entry name" value="serS"/>
    <property type="match status" value="1"/>
</dbReference>
<dbReference type="PANTHER" id="PTHR11778">
    <property type="entry name" value="SERYL-TRNA SYNTHETASE"/>
    <property type="match status" value="1"/>
</dbReference>
<dbReference type="Pfam" id="PF02403">
    <property type="entry name" value="Seryl_tRNA_N"/>
    <property type="match status" value="1"/>
</dbReference>
<dbReference type="Pfam" id="PF00587">
    <property type="entry name" value="tRNA-synt_2b"/>
    <property type="match status" value="1"/>
</dbReference>
<dbReference type="PIRSF" id="PIRSF001529">
    <property type="entry name" value="Ser-tRNA-synth_IIa"/>
    <property type="match status" value="1"/>
</dbReference>
<dbReference type="PRINTS" id="PR00981">
    <property type="entry name" value="TRNASYNTHSER"/>
</dbReference>
<dbReference type="SUPFAM" id="SSF55681">
    <property type="entry name" value="Class II aaRS and biotin synthetases"/>
    <property type="match status" value="1"/>
</dbReference>
<dbReference type="SUPFAM" id="SSF46589">
    <property type="entry name" value="tRNA-binding arm"/>
    <property type="match status" value="1"/>
</dbReference>
<dbReference type="PROSITE" id="PS50862">
    <property type="entry name" value="AA_TRNA_LIGASE_II"/>
    <property type="match status" value="1"/>
</dbReference>
<organism>
    <name type="scientific">Bifidobacterium animalis subsp. lactis (strain AD011)</name>
    <dbReference type="NCBI Taxonomy" id="442563"/>
    <lineage>
        <taxon>Bacteria</taxon>
        <taxon>Bacillati</taxon>
        <taxon>Actinomycetota</taxon>
        <taxon>Actinomycetes</taxon>
        <taxon>Bifidobacteriales</taxon>
        <taxon>Bifidobacteriaceae</taxon>
        <taxon>Bifidobacterium</taxon>
    </lineage>
</organism>
<reference key="1">
    <citation type="journal article" date="2009" name="J. Bacteriol.">
        <title>Genome sequence of the probiotic bacterium Bifidobacterium animalis subsp. lactis AD011.</title>
        <authorList>
            <person name="Kim J.F."/>
            <person name="Jeong H."/>
            <person name="Yu D.S."/>
            <person name="Choi S.-H."/>
            <person name="Hur C.-G."/>
            <person name="Park M.-S."/>
            <person name="Yoon S.H."/>
            <person name="Kim D.-W."/>
            <person name="Ji G.E."/>
            <person name="Park H.-S."/>
            <person name="Oh T.K."/>
        </authorList>
    </citation>
    <scope>NUCLEOTIDE SEQUENCE [LARGE SCALE GENOMIC DNA]</scope>
    <source>
        <strain>AD011</strain>
    </source>
</reference>
<protein>
    <recommendedName>
        <fullName evidence="1">Serine--tRNA ligase</fullName>
        <ecNumber evidence="1">6.1.1.11</ecNumber>
    </recommendedName>
    <alternativeName>
        <fullName evidence="1">Seryl-tRNA synthetase</fullName>
        <shortName evidence="1">SerRS</shortName>
    </alternativeName>
    <alternativeName>
        <fullName evidence="1">Seryl-tRNA(Ser/Sec) synthetase</fullName>
    </alternativeName>
</protein>
<keyword id="KW-0030">Aminoacyl-tRNA synthetase</keyword>
<keyword id="KW-0067">ATP-binding</keyword>
<keyword id="KW-0963">Cytoplasm</keyword>
<keyword id="KW-0436">Ligase</keyword>
<keyword id="KW-0547">Nucleotide-binding</keyword>
<keyword id="KW-0648">Protein biosynthesis</keyword>
<keyword id="KW-1185">Reference proteome</keyword>
<evidence type="ECO:0000255" key="1">
    <source>
        <dbReference type="HAMAP-Rule" id="MF_00176"/>
    </source>
</evidence>
<feature type="chain" id="PRO_1000123871" description="Serine--tRNA ligase">
    <location>
        <begin position="1"/>
        <end position="428"/>
    </location>
</feature>
<feature type="binding site" evidence="1">
    <location>
        <begin position="231"/>
        <end position="233"/>
    </location>
    <ligand>
        <name>L-serine</name>
        <dbReference type="ChEBI" id="CHEBI:33384"/>
    </ligand>
</feature>
<feature type="binding site" evidence="1">
    <location>
        <begin position="262"/>
        <end position="264"/>
    </location>
    <ligand>
        <name>ATP</name>
        <dbReference type="ChEBI" id="CHEBI:30616"/>
    </ligand>
</feature>
<feature type="binding site" evidence="1">
    <location>
        <position position="278"/>
    </location>
    <ligand>
        <name>ATP</name>
        <dbReference type="ChEBI" id="CHEBI:30616"/>
    </ligand>
</feature>
<feature type="binding site" evidence="1">
    <location>
        <position position="285"/>
    </location>
    <ligand>
        <name>L-serine</name>
        <dbReference type="ChEBI" id="CHEBI:33384"/>
    </ligand>
</feature>
<feature type="binding site" evidence="1">
    <location>
        <begin position="349"/>
        <end position="352"/>
    </location>
    <ligand>
        <name>ATP</name>
        <dbReference type="ChEBI" id="CHEBI:30616"/>
    </ligand>
</feature>
<feature type="binding site" evidence="1">
    <location>
        <position position="384"/>
    </location>
    <ligand>
        <name>L-serine</name>
        <dbReference type="ChEBI" id="CHEBI:33384"/>
    </ligand>
</feature>
<gene>
    <name evidence="1" type="primary">serS</name>
    <name type="ordered locus">BLA_0401</name>
</gene>
<name>SYS_BIFA0</name>
<comment type="function">
    <text evidence="1">Catalyzes the attachment of serine to tRNA(Ser). Is also able to aminoacylate tRNA(Sec) with serine, to form the misacylated tRNA L-seryl-tRNA(Sec), which will be further converted into selenocysteinyl-tRNA(Sec).</text>
</comment>
<comment type="catalytic activity">
    <reaction evidence="1">
        <text>tRNA(Ser) + L-serine + ATP = L-seryl-tRNA(Ser) + AMP + diphosphate + H(+)</text>
        <dbReference type="Rhea" id="RHEA:12292"/>
        <dbReference type="Rhea" id="RHEA-COMP:9669"/>
        <dbReference type="Rhea" id="RHEA-COMP:9703"/>
        <dbReference type="ChEBI" id="CHEBI:15378"/>
        <dbReference type="ChEBI" id="CHEBI:30616"/>
        <dbReference type="ChEBI" id="CHEBI:33019"/>
        <dbReference type="ChEBI" id="CHEBI:33384"/>
        <dbReference type="ChEBI" id="CHEBI:78442"/>
        <dbReference type="ChEBI" id="CHEBI:78533"/>
        <dbReference type="ChEBI" id="CHEBI:456215"/>
        <dbReference type="EC" id="6.1.1.11"/>
    </reaction>
</comment>
<comment type="catalytic activity">
    <reaction evidence="1">
        <text>tRNA(Sec) + L-serine + ATP = L-seryl-tRNA(Sec) + AMP + diphosphate + H(+)</text>
        <dbReference type="Rhea" id="RHEA:42580"/>
        <dbReference type="Rhea" id="RHEA-COMP:9742"/>
        <dbReference type="Rhea" id="RHEA-COMP:10128"/>
        <dbReference type="ChEBI" id="CHEBI:15378"/>
        <dbReference type="ChEBI" id="CHEBI:30616"/>
        <dbReference type="ChEBI" id="CHEBI:33019"/>
        <dbReference type="ChEBI" id="CHEBI:33384"/>
        <dbReference type="ChEBI" id="CHEBI:78442"/>
        <dbReference type="ChEBI" id="CHEBI:78533"/>
        <dbReference type="ChEBI" id="CHEBI:456215"/>
        <dbReference type="EC" id="6.1.1.11"/>
    </reaction>
</comment>
<comment type="pathway">
    <text evidence="1">Aminoacyl-tRNA biosynthesis; selenocysteinyl-tRNA(Sec) biosynthesis; L-seryl-tRNA(Sec) from L-serine and tRNA(Sec): step 1/1.</text>
</comment>
<comment type="subunit">
    <text evidence="1">Homodimer. The tRNA molecule binds across the dimer.</text>
</comment>
<comment type="subcellular location">
    <subcellularLocation>
        <location evidence="1">Cytoplasm</location>
    </subcellularLocation>
</comment>
<comment type="domain">
    <text evidence="1">Consists of two distinct domains, a catalytic core and a N-terminal extension that is involved in tRNA binding.</text>
</comment>
<comment type="similarity">
    <text evidence="1">Belongs to the class-II aminoacyl-tRNA synthetase family. Type-1 seryl-tRNA synthetase subfamily.</text>
</comment>
<sequence length="428" mass="47946">MLDIQFIREHPEVVKESQRKRGESVELVDEVLRADEERRSSLKQFEEARARQKEIGKQVAKAAPDEKAKLIAQTKELSEQVASFKASADTADEQYTTAMWQLSNIVEPQAPEGGEDDYVVMRKVGQIRDFAAEGFEPKDHLTLGEEVAGIDMKRGVKVSGSRFYFLRGDVARLQIAMLTMAVDQAQEHGFILAITPTLVRPEVMRGTGFLNSHADEIYRLREPDDDYLVGTSEVALAGMHENEILDLSDGPLRYCGWSSCYRREAGAAGKDTSGIIRVHQFDKVEMFVYAKPENSDAEHQKLLAMEEEMLAKVEVPYRVIDTAAGDLGSSAARKFDCEAWVPTQGRYRELTSTSNCTQYQARRLNIRERVADGGTSPVATLNGTLATTRWLVAILENHQQADGSIEIPKAMRPYMGGKEVIEPRKWEA</sequence>